<organism>
    <name type="scientific">Clostridium perfringens (strain ATCC 13124 / DSM 756 / JCM 1290 / NCIMB 6125 / NCTC 8237 / Type A)</name>
    <dbReference type="NCBI Taxonomy" id="195103"/>
    <lineage>
        <taxon>Bacteria</taxon>
        <taxon>Bacillati</taxon>
        <taxon>Bacillota</taxon>
        <taxon>Clostridia</taxon>
        <taxon>Eubacteriales</taxon>
        <taxon>Clostridiaceae</taxon>
        <taxon>Clostridium</taxon>
    </lineage>
</organism>
<sequence length="225" mass="25249">MGKVVSVILAGGKGKRMGAEVSKQFIEINGKPIIYYTLKAFEECKGIDEIILVLPKDEIDYFKREIEPRFDFKISKIIEGGKERQDSVYNALNSIGDCDIVLIHDGARAFVSNKIIEDGIKYSREFGAAAPGVMPKDTIKVKNLEGFSVDTPNRASLVAVQTPQCFKYNLIKKGHNKVKNEKIQVTDDTMIVELLGEKVYLFEGDYKNIKVTTPEDLILAEHFVK</sequence>
<accession>Q0TMM2</accession>
<feature type="chain" id="PRO_1000022918" description="2-C-methyl-D-erythritol 4-phosphate cytidylyltransferase">
    <location>
        <begin position="1"/>
        <end position="225"/>
    </location>
</feature>
<feature type="site" description="Transition state stabilizer" evidence="1">
    <location>
        <position position="16"/>
    </location>
</feature>
<feature type="site" description="Transition state stabilizer" evidence="1">
    <location>
        <position position="23"/>
    </location>
</feature>
<feature type="site" description="Positions MEP for the nucleophilic attack" evidence="1">
    <location>
        <position position="154"/>
    </location>
</feature>
<feature type="site" description="Positions MEP for the nucleophilic attack" evidence="1">
    <location>
        <position position="210"/>
    </location>
</feature>
<keyword id="KW-0414">Isoprene biosynthesis</keyword>
<keyword id="KW-0548">Nucleotidyltransferase</keyword>
<keyword id="KW-0808">Transferase</keyword>
<evidence type="ECO:0000255" key="1">
    <source>
        <dbReference type="HAMAP-Rule" id="MF_00108"/>
    </source>
</evidence>
<reference key="1">
    <citation type="journal article" date="2006" name="Genome Res.">
        <title>Skewed genomic variability in strains of the toxigenic bacterial pathogen, Clostridium perfringens.</title>
        <authorList>
            <person name="Myers G.S.A."/>
            <person name="Rasko D.A."/>
            <person name="Cheung J.K."/>
            <person name="Ravel J."/>
            <person name="Seshadri R."/>
            <person name="DeBoy R.T."/>
            <person name="Ren Q."/>
            <person name="Varga J."/>
            <person name="Awad M.M."/>
            <person name="Brinkac L.M."/>
            <person name="Daugherty S.C."/>
            <person name="Haft D.H."/>
            <person name="Dodson R.J."/>
            <person name="Madupu R."/>
            <person name="Nelson W.C."/>
            <person name="Rosovitz M.J."/>
            <person name="Sullivan S.A."/>
            <person name="Khouri H."/>
            <person name="Dimitrov G.I."/>
            <person name="Watkins K.L."/>
            <person name="Mulligan S."/>
            <person name="Benton J."/>
            <person name="Radune D."/>
            <person name="Fisher D.J."/>
            <person name="Atkins H.S."/>
            <person name="Hiscox T."/>
            <person name="Jost B.H."/>
            <person name="Billington S.J."/>
            <person name="Songer J.G."/>
            <person name="McClane B.A."/>
            <person name="Titball R.W."/>
            <person name="Rood J.I."/>
            <person name="Melville S.B."/>
            <person name="Paulsen I.T."/>
        </authorList>
    </citation>
    <scope>NUCLEOTIDE SEQUENCE [LARGE SCALE GENOMIC DNA]</scope>
    <source>
        <strain>ATCC 13124 / DSM 756 / JCM 1290 / NCIMB 6125 / NCTC 8237 / S 107 / Type A</strain>
    </source>
</reference>
<gene>
    <name evidence="1" type="primary">ispD</name>
    <name type="ordered locus">CPF_2739</name>
</gene>
<protein>
    <recommendedName>
        <fullName evidence="1">2-C-methyl-D-erythritol 4-phosphate cytidylyltransferase</fullName>
        <ecNumber evidence="1">2.7.7.60</ecNumber>
    </recommendedName>
    <alternativeName>
        <fullName evidence="1">4-diphosphocytidyl-2C-methyl-D-erythritol synthase</fullName>
    </alternativeName>
    <alternativeName>
        <fullName evidence="1">MEP cytidylyltransferase</fullName>
        <shortName evidence="1">MCT</shortName>
    </alternativeName>
</protein>
<dbReference type="EC" id="2.7.7.60" evidence="1"/>
<dbReference type="EMBL" id="CP000246">
    <property type="protein sequence ID" value="ABG83935.1"/>
    <property type="molecule type" value="Genomic_DNA"/>
</dbReference>
<dbReference type="RefSeq" id="WP_003459324.1">
    <property type="nucleotide sequence ID" value="NC_008261.1"/>
</dbReference>
<dbReference type="SMR" id="Q0TMM2"/>
<dbReference type="STRING" id="195103.CPF_2739"/>
<dbReference type="PaxDb" id="195103-CPF_2739"/>
<dbReference type="GeneID" id="93000984"/>
<dbReference type="KEGG" id="cpf:CPF_2739"/>
<dbReference type="eggNOG" id="COG1211">
    <property type="taxonomic scope" value="Bacteria"/>
</dbReference>
<dbReference type="HOGENOM" id="CLU_061281_2_2_9"/>
<dbReference type="UniPathway" id="UPA00056">
    <property type="reaction ID" value="UER00093"/>
</dbReference>
<dbReference type="Proteomes" id="UP000001823">
    <property type="component" value="Chromosome"/>
</dbReference>
<dbReference type="GO" id="GO:0050518">
    <property type="term" value="F:2-C-methyl-D-erythritol 4-phosphate cytidylyltransferase activity"/>
    <property type="evidence" value="ECO:0007669"/>
    <property type="project" value="UniProtKB-UniRule"/>
</dbReference>
<dbReference type="GO" id="GO:0019288">
    <property type="term" value="P:isopentenyl diphosphate biosynthetic process, methylerythritol 4-phosphate pathway"/>
    <property type="evidence" value="ECO:0007669"/>
    <property type="project" value="UniProtKB-UniRule"/>
</dbReference>
<dbReference type="CDD" id="cd02516">
    <property type="entry name" value="CDP-ME_synthetase"/>
    <property type="match status" value="1"/>
</dbReference>
<dbReference type="FunFam" id="3.90.550.10:FF:000003">
    <property type="entry name" value="2-C-methyl-D-erythritol 4-phosphate cytidylyltransferase"/>
    <property type="match status" value="1"/>
</dbReference>
<dbReference type="Gene3D" id="3.90.550.10">
    <property type="entry name" value="Spore Coat Polysaccharide Biosynthesis Protein SpsA, Chain A"/>
    <property type="match status" value="1"/>
</dbReference>
<dbReference type="HAMAP" id="MF_00108">
    <property type="entry name" value="IspD"/>
    <property type="match status" value="1"/>
</dbReference>
<dbReference type="InterPro" id="IPR001228">
    <property type="entry name" value="IspD"/>
</dbReference>
<dbReference type="InterPro" id="IPR034683">
    <property type="entry name" value="IspD/TarI"/>
</dbReference>
<dbReference type="InterPro" id="IPR050088">
    <property type="entry name" value="IspD/TarI_cytidylyltransf_bact"/>
</dbReference>
<dbReference type="InterPro" id="IPR018294">
    <property type="entry name" value="ISPD_synthase_CS"/>
</dbReference>
<dbReference type="InterPro" id="IPR029044">
    <property type="entry name" value="Nucleotide-diphossugar_trans"/>
</dbReference>
<dbReference type="NCBIfam" id="TIGR00453">
    <property type="entry name" value="ispD"/>
    <property type="match status" value="1"/>
</dbReference>
<dbReference type="NCBIfam" id="NF001183">
    <property type="entry name" value="PRK00155.1-3"/>
    <property type="match status" value="1"/>
</dbReference>
<dbReference type="PANTHER" id="PTHR32125">
    <property type="entry name" value="2-C-METHYL-D-ERYTHRITOL 4-PHOSPHATE CYTIDYLYLTRANSFERASE, CHLOROPLASTIC"/>
    <property type="match status" value="1"/>
</dbReference>
<dbReference type="PANTHER" id="PTHR32125:SF4">
    <property type="entry name" value="2-C-METHYL-D-ERYTHRITOL 4-PHOSPHATE CYTIDYLYLTRANSFERASE, CHLOROPLASTIC"/>
    <property type="match status" value="1"/>
</dbReference>
<dbReference type="Pfam" id="PF01128">
    <property type="entry name" value="IspD"/>
    <property type="match status" value="1"/>
</dbReference>
<dbReference type="SUPFAM" id="SSF53448">
    <property type="entry name" value="Nucleotide-diphospho-sugar transferases"/>
    <property type="match status" value="1"/>
</dbReference>
<dbReference type="PROSITE" id="PS01295">
    <property type="entry name" value="ISPD"/>
    <property type="match status" value="1"/>
</dbReference>
<name>ISPD_CLOP1</name>
<proteinExistence type="inferred from homology"/>
<comment type="function">
    <text evidence="1">Catalyzes the formation of 4-diphosphocytidyl-2-C-methyl-D-erythritol from CTP and 2-C-methyl-D-erythritol 4-phosphate (MEP).</text>
</comment>
<comment type="catalytic activity">
    <reaction evidence="1">
        <text>2-C-methyl-D-erythritol 4-phosphate + CTP + H(+) = 4-CDP-2-C-methyl-D-erythritol + diphosphate</text>
        <dbReference type="Rhea" id="RHEA:13429"/>
        <dbReference type="ChEBI" id="CHEBI:15378"/>
        <dbReference type="ChEBI" id="CHEBI:33019"/>
        <dbReference type="ChEBI" id="CHEBI:37563"/>
        <dbReference type="ChEBI" id="CHEBI:57823"/>
        <dbReference type="ChEBI" id="CHEBI:58262"/>
        <dbReference type="EC" id="2.7.7.60"/>
    </reaction>
</comment>
<comment type="pathway">
    <text evidence="1">Isoprenoid biosynthesis; isopentenyl diphosphate biosynthesis via DXP pathway; isopentenyl diphosphate from 1-deoxy-D-xylulose 5-phosphate: step 2/6.</text>
</comment>
<comment type="similarity">
    <text evidence="1">Belongs to the IspD/TarI cytidylyltransferase family. IspD subfamily.</text>
</comment>